<gene>
    <name evidence="5" type="primary">Rca</name>
    <name evidence="4" type="synonym">CbbX</name>
    <name evidence="7" type="ORF">CYME_CMT172C</name>
</gene>
<keyword id="KW-0067">ATP-binding</keyword>
<keyword id="KW-0150">Chloroplast</keyword>
<keyword id="KW-0547">Nucleotide-binding</keyword>
<keyword id="KW-0934">Plastid</keyword>
<keyword id="KW-1185">Reference proteome</keyword>
<keyword id="KW-0809">Transit peptide</keyword>
<organism>
    <name type="scientific">Cyanidioschyzon merolae (strain NIES-3377 / 10D)</name>
    <name type="common">Unicellular red alga</name>
    <dbReference type="NCBI Taxonomy" id="280699"/>
    <lineage>
        <taxon>Eukaryota</taxon>
        <taxon>Rhodophyta</taxon>
        <taxon>Bangiophyceae</taxon>
        <taxon>Cyanidiales</taxon>
        <taxon>Cyanidiaceae</taxon>
        <taxon>Cyanidioschyzon</taxon>
    </lineage>
</organism>
<reference key="1">
    <citation type="journal article" date="2004" name="Nature">
        <title>Genome sequence of the ultrasmall unicellular red alga Cyanidioschyzon merolae 10D.</title>
        <authorList>
            <person name="Matsuzaki M."/>
            <person name="Misumi O."/>
            <person name="Shin-i T."/>
            <person name="Maruyama S."/>
            <person name="Takahara M."/>
            <person name="Miyagishima S."/>
            <person name="Mori T."/>
            <person name="Nishida K."/>
            <person name="Yagisawa F."/>
            <person name="Nishida K."/>
            <person name="Yoshida Y."/>
            <person name="Nishimura Y."/>
            <person name="Nakao S."/>
            <person name="Kobayashi T."/>
            <person name="Momoyama Y."/>
            <person name="Higashiyama T."/>
            <person name="Minoda A."/>
            <person name="Sano M."/>
            <person name="Nomoto H."/>
            <person name="Oishi K."/>
            <person name="Hayashi H."/>
            <person name="Ohta F."/>
            <person name="Nishizaka S."/>
            <person name="Haga S."/>
            <person name="Miura S."/>
            <person name="Morishita T."/>
            <person name="Kabeya Y."/>
            <person name="Terasawa K."/>
            <person name="Suzuki Y."/>
            <person name="Ishii Y."/>
            <person name="Asakawa S."/>
            <person name="Takano H."/>
            <person name="Ohta N."/>
            <person name="Kuroiwa H."/>
            <person name="Tanaka K."/>
            <person name="Shimizu N."/>
            <person name="Sugano S."/>
            <person name="Sato N."/>
            <person name="Nozaki H."/>
            <person name="Ogasawara N."/>
            <person name="Kohara Y."/>
            <person name="Kuroiwa T."/>
        </authorList>
    </citation>
    <scope>NUCLEOTIDE SEQUENCE [LARGE SCALE GENOMIC DNA]</scope>
    <source>
        <strain>NIES-3377 / 10D</strain>
    </source>
</reference>
<reference key="2">
    <citation type="journal article" date="2007" name="BMC Biol.">
        <title>A 100%-complete sequence reveals unusually simple genomic features in the hot-spring red alga Cyanidioschyzon merolae.</title>
        <authorList>
            <person name="Nozaki H."/>
            <person name="Takano H."/>
            <person name="Misumi O."/>
            <person name="Terasawa K."/>
            <person name="Matsuzaki M."/>
            <person name="Maruyama S."/>
            <person name="Nishida K."/>
            <person name="Yagisawa F."/>
            <person name="Yoshida Y."/>
            <person name="Fujiwara T."/>
            <person name="Takio S."/>
            <person name="Tamura K."/>
            <person name="Chung S.J."/>
            <person name="Nakamura S."/>
            <person name="Kuroiwa H."/>
            <person name="Tanaka K."/>
            <person name="Sato N."/>
            <person name="Kuroiwa T."/>
        </authorList>
    </citation>
    <scope>NUCLEOTIDE SEQUENCE [LARGE SCALE GENOMIC DNA]</scope>
    <source>
        <strain>NIES-3377 / 10D</strain>
    </source>
</reference>
<reference key="3">
    <citation type="journal article" date="2008" name="Genes Genet. Syst.">
        <title>Functional analysis of the plastid and nuclear encoded CbbX proteins of Cyanidioschyzon merolae.</title>
        <authorList>
            <person name="Fujita K."/>
            <person name="Tanaka K."/>
            <person name="Sadaie Y."/>
            <person name="Ohta N."/>
        </authorList>
    </citation>
    <scope>FUNCTION</scope>
</reference>
<reference key="4">
    <citation type="journal article" date="2016" name="Proc. Natl. Acad. Sci. U.S.A.">
        <title>Characterization of the heterooligomeric red-type rubisco activase from red algae.</title>
        <authorList>
            <person name="Loganathan N."/>
            <person name="Tsai Y.C."/>
            <person name="Mueller-Cajar O."/>
        </authorList>
    </citation>
    <scope>FUNCTION</scope>
    <scope>SUBUNIT</scope>
    <scope>MUTAGENESIS OF LYS-79; TYR-113; GLU-137; ARG-193 AND ARG-238</scope>
</reference>
<dbReference type="EMBL" id="AP006502">
    <property type="protein sequence ID" value="BAM83166.1"/>
    <property type="molecule type" value="Genomic_DNA"/>
</dbReference>
<dbReference type="RefSeq" id="XP_005539202.1">
    <property type="nucleotide sequence ID" value="XM_005539145.1"/>
</dbReference>
<dbReference type="SMR" id="M1UXG8"/>
<dbReference type="STRING" id="280699.M1UXG8"/>
<dbReference type="GeneID" id="16997649"/>
<dbReference type="KEGG" id="cme:CYME_CMT172C"/>
<dbReference type="eggNOG" id="KOG0730">
    <property type="taxonomic scope" value="Eukaryota"/>
</dbReference>
<dbReference type="HOGENOM" id="CLU_008749_1_3_1"/>
<dbReference type="OrthoDB" id="2423195at2759"/>
<dbReference type="Proteomes" id="UP000007014">
    <property type="component" value="Chromosome 20"/>
</dbReference>
<dbReference type="GO" id="GO:0009507">
    <property type="term" value="C:chloroplast"/>
    <property type="evidence" value="ECO:0007669"/>
    <property type="project" value="UniProtKB-SubCell"/>
</dbReference>
<dbReference type="GO" id="GO:0005524">
    <property type="term" value="F:ATP binding"/>
    <property type="evidence" value="ECO:0007669"/>
    <property type="project" value="UniProtKB-KW"/>
</dbReference>
<dbReference type="GO" id="GO:0016887">
    <property type="term" value="F:ATP hydrolysis activity"/>
    <property type="evidence" value="ECO:0007669"/>
    <property type="project" value="InterPro"/>
</dbReference>
<dbReference type="CDD" id="cd00009">
    <property type="entry name" value="AAA"/>
    <property type="match status" value="1"/>
</dbReference>
<dbReference type="FunFam" id="3.40.50.300:FF:000216">
    <property type="entry name" value="Type VII secretion ATPase EccA"/>
    <property type="match status" value="1"/>
</dbReference>
<dbReference type="Gene3D" id="1.10.8.60">
    <property type="match status" value="1"/>
</dbReference>
<dbReference type="Gene3D" id="3.40.50.300">
    <property type="entry name" value="P-loop containing nucleotide triphosphate hydrolases"/>
    <property type="match status" value="1"/>
</dbReference>
<dbReference type="InterPro" id="IPR003593">
    <property type="entry name" value="AAA+_ATPase"/>
</dbReference>
<dbReference type="InterPro" id="IPR041627">
    <property type="entry name" value="AAA_lid_6"/>
</dbReference>
<dbReference type="InterPro" id="IPR003959">
    <property type="entry name" value="ATPase_AAA_core"/>
</dbReference>
<dbReference type="InterPro" id="IPR000470">
    <property type="entry name" value="CbxX/CfqX_mono"/>
</dbReference>
<dbReference type="InterPro" id="IPR000641">
    <property type="entry name" value="CbxX/CfxQ"/>
</dbReference>
<dbReference type="InterPro" id="IPR050773">
    <property type="entry name" value="CbxX/CfxQ_RuBisCO_ESX"/>
</dbReference>
<dbReference type="InterPro" id="IPR018247">
    <property type="entry name" value="EF_Hand_1_Ca_BS"/>
</dbReference>
<dbReference type="InterPro" id="IPR027417">
    <property type="entry name" value="P-loop_NTPase"/>
</dbReference>
<dbReference type="PANTHER" id="PTHR43392">
    <property type="entry name" value="AAA-TYPE ATPASE FAMILY PROTEIN / ANKYRIN REPEAT FAMILY PROTEIN"/>
    <property type="match status" value="1"/>
</dbReference>
<dbReference type="PANTHER" id="PTHR43392:SF2">
    <property type="entry name" value="AAA-TYPE ATPASE FAMILY PROTEIN _ ANKYRIN REPEAT FAMILY PROTEIN"/>
    <property type="match status" value="1"/>
</dbReference>
<dbReference type="Pfam" id="PF00004">
    <property type="entry name" value="AAA"/>
    <property type="match status" value="1"/>
</dbReference>
<dbReference type="Pfam" id="PF17866">
    <property type="entry name" value="AAA_lid_6"/>
    <property type="match status" value="1"/>
</dbReference>
<dbReference type="PRINTS" id="PR00819">
    <property type="entry name" value="CBXCFQXSUPER"/>
</dbReference>
<dbReference type="PRINTS" id="PR00820">
    <property type="entry name" value="CBXXCFQX"/>
</dbReference>
<dbReference type="SMART" id="SM00382">
    <property type="entry name" value="AAA"/>
    <property type="match status" value="1"/>
</dbReference>
<dbReference type="SUPFAM" id="SSF52540">
    <property type="entry name" value="P-loop containing nucleoside triphosphate hydrolases"/>
    <property type="match status" value="1"/>
</dbReference>
<sequence length="307" mass="34607">MSIPDDKEAGTIDEFLQKEGVLDILQKLDHDLVGLKPVKDRVREIAALLVVDKLRSRLGLTGTTPSLHMAFTGSPGTGKTTVAMRMGQILKAMGYSRSGHLIVATRDDLVGQYVGHTAPKTKEVIKRAFGGVLFIDEAYYLYNAANDRDYGVEAIEILLNVMEEQREDLVVIFAGYEDRMNKFYSYIPGISSRIGNHISFPDYTLEELVDIAKVMVRDMEYRIADDAIPACRAYIEKRMQMPYFSNARTVRNLINRARMRSAIRIFNKAMDPNADGLVSRDELMTLITEDFPTVQELLERGETAIVE</sequence>
<comment type="function">
    <text evidence="2 3">Required for the expression of ribulose 1,5-bisphosphate carboxylase/oxygenase (RuBisCo) (PubMed:18506097). ATPase involved in the activation of red-type RuBisCo, which tends to form inactive complexes with its substrate ribulose 1,5-bisphosphate (RuBP) (PubMed:27872295). Catalyzes the release of RuBP from inhibited RuBisCo in an ATP-dependent manner (PubMed:27872295). Activation of RuBisCO involves the ATP-dependent carboxylation of the epsilon-amino group of lysine leading to a carbamate structure (PubMed:27872295). The nuclear-encoded subunit plays a more critical role in activase function than the plastidial-encoded subunit (PubMed:27872295).</text>
</comment>
<comment type="subunit">
    <text evidence="3">Forms homooligomers (PubMed:27872295). Forms heterohexameric rings with the plastid-encoded Rca subunit consisting of 3 of each nuclear- and plastidial-encoded subunits that alternate in the ring (PubMed:27872295).</text>
</comment>
<comment type="subcellular location">
    <subcellularLocation>
        <location evidence="6">Plastid</location>
        <location evidence="6">Chloroplast</location>
    </subcellularLocation>
</comment>
<comment type="similarity">
    <text evidence="6">Belongs to the CbxX/CfxQ family.</text>
</comment>
<evidence type="ECO:0000255" key="1"/>
<evidence type="ECO:0000269" key="2">
    <source>
    </source>
</evidence>
<evidence type="ECO:0000269" key="3">
    <source>
    </source>
</evidence>
<evidence type="ECO:0000303" key="4">
    <source>
    </source>
</evidence>
<evidence type="ECO:0000303" key="5">
    <source>
    </source>
</evidence>
<evidence type="ECO:0000305" key="6"/>
<evidence type="ECO:0000312" key="7">
    <source>
        <dbReference type="EMBL" id="BAM83166.1"/>
    </source>
</evidence>
<proteinExistence type="evidence at protein level"/>
<feature type="transit peptide" description="Chloroplast" evidence="1">
    <location>
        <begin position="1"/>
        <end position="46"/>
    </location>
</feature>
<feature type="chain" id="PRO_0000447711" description="Ribulose bisphosphate carboxylase/oxygenase activase, chloroplastic">
    <location>
        <begin position="47"/>
        <end position="307"/>
    </location>
</feature>
<feature type="binding site" evidence="1">
    <location>
        <begin position="73"/>
        <end position="80"/>
    </location>
    <ligand>
        <name>ATP</name>
        <dbReference type="ChEBI" id="CHEBI:30616"/>
    </ligand>
</feature>
<feature type="mutagenesis site" description="Abolishes ATPase and activase activities." evidence="3">
    <original>K</original>
    <variation>A</variation>
    <location>
        <position position="79"/>
    </location>
</feature>
<feature type="mutagenesis site" description="Increases ATPase activity and abolishes activase activity." evidence="3">
    <original>Y</original>
    <variation>A</variation>
    <location>
        <position position="113"/>
    </location>
</feature>
<feature type="mutagenesis site" description="Abolishes ATPase and activase activities." evidence="3">
    <original>E</original>
    <variation>Q</variation>
    <location>
        <position position="137"/>
    </location>
</feature>
<feature type="mutagenesis site" description="Abolishes ATPase and activase activities." evidence="3">
    <original>R</original>
    <variation>A</variation>
    <location>
        <position position="193"/>
    </location>
</feature>
<feature type="mutagenesis site" description="Abolishes ATPase and activase activities." evidence="3">
    <original>R</original>
    <variation>A</variation>
    <location>
        <position position="238"/>
    </location>
</feature>
<accession>M1UXG8</accession>
<protein>
    <recommendedName>
        <fullName evidence="5">Ribulose bisphosphate carboxylase/oxygenase activase, chloroplastic</fullName>
        <shortName evidence="5">RuBisCO activase</shortName>
    </recommendedName>
    <alternativeName>
        <fullName evidence="6">Protein CbbX homolog</fullName>
    </alternativeName>
</protein>
<name>CBBX_CYAM1</name>